<reference key="1">
    <citation type="journal article" date="2008" name="Antimicrob. Agents Chemother.">
        <title>Mutated response regulator graR is responsible for phenotypic conversion of Staphylococcus aureus from heterogeneous vancomycin-intermediate resistance to vancomycin-intermediate resistance.</title>
        <authorList>
            <person name="Neoh H.-M."/>
            <person name="Cui L."/>
            <person name="Yuzawa H."/>
            <person name="Takeuchi F."/>
            <person name="Matsuo M."/>
            <person name="Hiramatsu K."/>
        </authorList>
    </citation>
    <scope>NUCLEOTIDE SEQUENCE [LARGE SCALE GENOMIC DNA]</scope>
    <source>
        <strain>Mu3 / ATCC 700698</strain>
    </source>
</reference>
<keyword id="KW-0028">Amino-acid biosynthesis</keyword>
<keyword id="KW-0055">Arginine biosynthesis</keyword>
<keyword id="KW-0963">Cytoplasm</keyword>
<keyword id="KW-0456">Lyase</keyword>
<evidence type="ECO:0000255" key="1">
    <source>
        <dbReference type="HAMAP-Rule" id="MF_00006"/>
    </source>
</evidence>
<sequence>MSNKAWGGRFEVQPEEWVDDFNASITFDQTLIDQDIEGSIAHATMLANQGIISQQDSEQIIQGLKSIQHDYHQDQIQFSASLEDIHLNIEHELIKRIGDAGGKLHTGRSRNDQVATDMHLYTKKQVQDIIALIKSLQSVIVDIASNNVDTIMPGYTHLQRAQPISFAHHIMTYFWMLQRDQQRFEDSLKRIDINPLGAAALSGTTYPIDRHETTALLNFGSLYENSLDAVSDRDYIIETLHNISLTMVHLSRFAEEIIFWSTDEAKFITLSDAFSTGSSIMPQKKNPDMAELIRGKVGRTTGHLMSMLMTLKGLPLAYNKDMQEDKEGLFDAVHTIKGSLRIFEGMIQTMTINKERLNQTVKEDFSNATELADYLVTKNIPFRTAHEIVGKIVLECIQQGHYLLDVPLATYQQHHSSIDADIYDYLQPENCLKRRQSYGSTGQSSVKQQLDVAKQLLSQ</sequence>
<dbReference type="EC" id="4.3.2.1" evidence="1"/>
<dbReference type="EMBL" id="AP009324">
    <property type="protein sequence ID" value="BAF77838.1"/>
    <property type="molecule type" value="Genomic_DNA"/>
</dbReference>
<dbReference type="RefSeq" id="WP_000066053.1">
    <property type="nucleotide sequence ID" value="NZ_CTYB01000024.1"/>
</dbReference>
<dbReference type="SMR" id="A7X0H4"/>
<dbReference type="KEGG" id="saw:SAHV_0955"/>
<dbReference type="HOGENOM" id="CLU_027272_2_3_9"/>
<dbReference type="UniPathway" id="UPA00068">
    <property type="reaction ID" value="UER00114"/>
</dbReference>
<dbReference type="GO" id="GO:0005829">
    <property type="term" value="C:cytosol"/>
    <property type="evidence" value="ECO:0007669"/>
    <property type="project" value="TreeGrafter"/>
</dbReference>
<dbReference type="GO" id="GO:0004056">
    <property type="term" value="F:argininosuccinate lyase activity"/>
    <property type="evidence" value="ECO:0007669"/>
    <property type="project" value="UniProtKB-UniRule"/>
</dbReference>
<dbReference type="GO" id="GO:0042450">
    <property type="term" value="P:arginine biosynthetic process via ornithine"/>
    <property type="evidence" value="ECO:0007669"/>
    <property type="project" value="InterPro"/>
</dbReference>
<dbReference type="GO" id="GO:0006526">
    <property type="term" value="P:L-arginine biosynthetic process"/>
    <property type="evidence" value="ECO:0007669"/>
    <property type="project" value="UniProtKB-UniRule"/>
</dbReference>
<dbReference type="CDD" id="cd01359">
    <property type="entry name" value="Argininosuccinate_lyase"/>
    <property type="match status" value="1"/>
</dbReference>
<dbReference type="FunFam" id="1.10.275.10:FF:000002">
    <property type="entry name" value="Argininosuccinate lyase"/>
    <property type="match status" value="1"/>
</dbReference>
<dbReference type="FunFam" id="1.10.40.30:FF:000001">
    <property type="entry name" value="Argininosuccinate lyase"/>
    <property type="match status" value="1"/>
</dbReference>
<dbReference type="FunFam" id="1.20.200.10:FF:000006">
    <property type="entry name" value="Argininosuccinate lyase"/>
    <property type="match status" value="1"/>
</dbReference>
<dbReference type="Gene3D" id="1.10.40.30">
    <property type="entry name" value="Fumarase/aspartase (C-terminal domain)"/>
    <property type="match status" value="1"/>
</dbReference>
<dbReference type="Gene3D" id="1.20.200.10">
    <property type="entry name" value="Fumarase/aspartase (Central domain)"/>
    <property type="match status" value="1"/>
</dbReference>
<dbReference type="Gene3D" id="1.10.275.10">
    <property type="entry name" value="Fumarase/aspartase (N-terminal domain)"/>
    <property type="match status" value="1"/>
</dbReference>
<dbReference type="HAMAP" id="MF_00006">
    <property type="entry name" value="Arg_succ_lyase"/>
    <property type="match status" value="1"/>
</dbReference>
<dbReference type="InterPro" id="IPR029419">
    <property type="entry name" value="Arg_succ_lyase_C"/>
</dbReference>
<dbReference type="InterPro" id="IPR009049">
    <property type="entry name" value="Argininosuccinate_lyase"/>
</dbReference>
<dbReference type="InterPro" id="IPR024083">
    <property type="entry name" value="Fumarase/histidase_N"/>
</dbReference>
<dbReference type="InterPro" id="IPR020557">
    <property type="entry name" value="Fumarate_lyase_CS"/>
</dbReference>
<dbReference type="InterPro" id="IPR000362">
    <property type="entry name" value="Fumarate_lyase_fam"/>
</dbReference>
<dbReference type="InterPro" id="IPR022761">
    <property type="entry name" value="Fumarate_lyase_N"/>
</dbReference>
<dbReference type="InterPro" id="IPR008948">
    <property type="entry name" value="L-Aspartase-like"/>
</dbReference>
<dbReference type="NCBIfam" id="TIGR00838">
    <property type="entry name" value="argH"/>
    <property type="match status" value="1"/>
</dbReference>
<dbReference type="PANTHER" id="PTHR43814">
    <property type="entry name" value="ARGININOSUCCINATE LYASE"/>
    <property type="match status" value="1"/>
</dbReference>
<dbReference type="PANTHER" id="PTHR43814:SF1">
    <property type="entry name" value="ARGININOSUCCINATE LYASE"/>
    <property type="match status" value="1"/>
</dbReference>
<dbReference type="Pfam" id="PF14698">
    <property type="entry name" value="ASL_C2"/>
    <property type="match status" value="1"/>
</dbReference>
<dbReference type="Pfam" id="PF00206">
    <property type="entry name" value="Lyase_1"/>
    <property type="match status" value="1"/>
</dbReference>
<dbReference type="PRINTS" id="PR00145">
    <property type="entry name" value="ARGSUCLYASE"/>
</dbReference>
<dbReference type="PRINTS" id="PR00149">
    <property type="entry name" value="FUMRATELYASE"/>
</dbReference>
<dbReference type="SUPFAM" id="SSF48557">
    <property type="entry name" value="L-aspartase-like"/>
    <property type="match status" value="1"/>
</dbReference>
<dbReference type="PROSITE" id="PS00163">
    <property type="entry name" value="FUMARATE_LYASES"/>
    <property type="match status" value="1"/>
</dbReference>
<proteinExistence type="inferred from homology"/>
<name>ARLY_STAA1</name>
<gene>
    <name evidence="1" type="primary">argH</name>
    <name type="ordered locus">SAHV_0955</name>
</gene>
<comment type="catalytic activity">
    <reaction evidence="1">
        <text>2-(N(omega)-L-arginino)succinate = fumarate + L-arginine</text>
        <dbReference type="Rhea" id="RHEA:24020"/>
        <dbReference type="ChEBI" id="CHEBI:29806"/>
        <dbReference type="ChEBI" id="CHEBI:32682"/>
        <dbReference type="ChEBI" id="CHEBI:57472"/>
        <dbReference type="EC" id="4.3.2.1"/>
    </reaction>
</comment>
<comment type="pathway">
    <text evidence="1">Amino-acid biosynthesis; L-arginine biosynthesis; L-arginine from L-ornithine and carbamoyl phosphate: step 3/3.</text>
</comment>
<comment type="subcellular location">
    <subcellularLocation>
        <location evidence="1">Cytoplasm</location>
    </subcellularLocation>
</comment>
<comment type="similarity">
    <text evidence="1">Belongs to the lyase 1 family. Argininosuccinate lyase subfamily.</text>
</comment>
<organism>
    <name type="scientific">Staphylococcus aureus (strain Mu3 / ATCC 700698)</name>
    <dbReference type="NCBI Taxonomy" id="418127"/>
    <lineage>
        <taxon>Bacteria</taxon>
        <taxon>Bacillati</taxon>
        <taxon>Bacillota</taxon>
        <taxon>Bacilli</taxon>
        <taxon>Bacillales</taxon>
        <taxon>Staphylococcaceae</taxon>
        <taxon>Staphylococcus</taxon>
    </lineage>
</organism>
<accession>A7X0H4</accession>
<feature type="chain" id="PRO_1000000546" description="Argininosuccinate lyase">
    <location>
        <begin position="1"/>
        <end position="459"/>
    </location>
</feature>
<protein>
    <recommendedName>
        <fullName evidence="1">Argininosuccinate lyase</fullName>
        <shortName evidence="1">ASAL</shortName>
        <ecNumber evidence="1">4.3.2.1</ecNumber>
    </recommendedName>
    <alternativeName>
        <fullName evidence="1">Arginosuccinase</fullName>
    </alternativeName>
</protein>